<accession>Q4JW02</accession>
<name>ARGB_CORJK</name>
<evidence type="ECO:0000255" key="1">
    <source>
        <dbReference type="HAMAP-Rule" id="MF_00082"/>
    </source>
</evidence>
<organism>
    <name type="scientific">Corynebacterium jeikeium (strain K411)</name>
    <dbReference type="NCBI Taxonomy" id="306537"/>
    <lineage>
        <taxon>Bacteria</taxon>
        <taxon>Bacillati</taxon>
        <taxon>Actinomycetota</taxon>
        <taxon>Actinomycetes</taxon>
        <taxon>Mycobacteriales</taxon>
        <taxon>Corynebacteriaceae</taxon>
        <taxon>Corynebacterium</taxon>
    </lineage>
</organism>
<sequence length="317" mass="34061">MNPKHTPIDTTGLTPEMRSHVLAEALPWLLHYRDKIVVVKYGGNAMIDEDLKRAFAADMVFLRAIGARPVVVHGGGPQINEMLKTVGLEGEFKGGFRVTTPEVMEYVRMVLFGKVGRELVGLINEHGPYAVGASGEDAGLFTASKRMITVDGEEVDLGRVGQIEHVDAESLIDLIDAGRIPVVSTVAPDDQGRIYNINADTAAGALAGALGAERLVMLTNVKGLYTDWPNKESLVSSLTPEQLSDLLPNLDSGMVPKMEACLDALRSGVQAAHVIDGRIPHSVILELMTTGGIGTMICPAGWEDIASPDINYREDLP</sequence>
<protein>
    <recommendedName>
        <fullName evidence="1">Acetylglutamate kinase</fullName>
        <ecNumber evidence="1">2.7.2.8</ecNumber>
    </recommendedName>
    <alternativeName>
        <fullName evidence="1">N-acetyl-L-glutamate 5-phosphotransferase</fullName>
    </alternativeName>
    <alternativeName>
        <fullName evidence="1">NAG kinase</fullName>
        <shortName evidence="1">NAGK</shortName>
    </alternativeName>
</protein>
<dbReference type="EC" id="2.7.2.8" evidence="1"/>
<dbReference type="EMBL" id="CR931997">
    <property type="protein sequence ID" value="CAI37005.1"/>
    <property type="molecule type" value="Genomic_DNA"/>
</dbReference>
<dbReference type="RefSeq" id="WP_011273444.1">
    <property type="nucleotide sequence ID" value="NC_007164.1"/>
</dbReference>
<dbReference type="SMR" id="Q4JW02"/>
<dbReference type="STRING" id="306537.jk0843"/>
<dbReference type="KEGG" id="cjk:jk0843"/>
<dbReference type="PATRIC" id="fig|306537.10.peg.854"/>
<dbReference type="eggNOG" id="COG0548">
    <property type="taxonomic scope" value="Bacteria"/>
</dbReference>
<dbReference type="HOGENOM" id="CLU_053680_0_0_11"/>
<dbReference type="OrthoDB" id="9803155at2"/>
<dbReference type="UniPathway" id="UPA00068">
    <property type="reaction ID" value="UER00107"/>
</dbReference>
<dbReference type="Proteomes" id="UP000000545">
    <property type="component" value="Chromosome"/>
</dbReference>
<dbReference type="GO" id="GO:0005737">
    <property type="term" value="C:cytoplasm"/>
    <property type="evidence" value="ECO:0007669"/>
    <property type="project" value="UniProtKB-SubCell"/>
</dbReference>
<dbReference type="GO" id="GO:0003991">
    <property type="term" value="F:acetylglutamate kinase activity"/>
    <property type="evidence" value="ECO:0007669"/>
    <property type="project" value="UniProtKB-UniRule"/>
</dbReference>
<dbReference type="GO" id="GO:0005524">
    <property type="term" value="F:ATP binding"/>
    <property type="evidence" value="ECO:0007669"/>
    <property type="project" value="UniProtKB-UniRule"/>
</dbReference>
<dbReference type="GO" id="GO:0042450">
    <property type="term" value="P:arginine biosynthetic process via ornithine"/>
    <property type="evidence" value="ECO:0007669"/>
    <property type="project" value="UniProtKB-UniRule"/>
</dbReference>
<dbReference type="GO" id="GO:0006526">
    <property type="term" value="P:L-arginine biosynthetic process"/>
    <property type="evidence" value="ECO:0007669"/>
    <property type="project" value="UniProtKB-UniPathway"/>
</dbReference>
<dbReference type="CDD" id="cd04250">
    <property type="entry name" value="AAK_NAGK-C"/>
    <property type="match status" value="1"/>
</dbReference>
<dbReference type="FunFam" id="3.40.1160.10:FF:000004">
    <property type="entry name" value="Acetylglutamate kinase"/>
    <property type="match status" value="1"/>
</dbReference>
<dbReference type="Gene3D" id="3.40.1160.10">
    <property type="entry name" value="Acetylglutamate kinase-like"/>
    <property type="match status" value="1"/>
</dbReference>
<dbReference type="HAMAP" id="MF_00082">
    <property type="entry name" value="ArgB"/>
    <property type="match status" value="1"/>
</dbReference>
<dbReference type="InterPro" id="IPR036393">
    <property type="entry name" value="AceGlu_kinase-like_sf"/>
</dbReference>
<dbReference type="InterPro" id="IPR004662">
    <property type="entry name" value="AcgluKinase_fam"/>
</dbReference>
<dbReference type="InterPro" id="IPR037528">
    <property type="entry name" value="ArgB"/>
</dbReference>
<dbReference type="InterPro" id="IPR001048">
    <property type="entry name" value="Asp/Glu/Uridylate_kinase"/>
</dbReference>
<dbReference type="InterPro" id="IPR001057">
    <property type="entry name" value="Glu/AcGlu_kinase"/>
</dbReference>
<dbReference type="InterPro" id="IPR041727">
    <property type="entry name" value="NAGK-C"/>
</dbReference>
<dbReference type="NCBIfam" id="TIGR00761">
    <property type="entry name" value="argB"/>
    <property type="match status" value="1"/>
</dbReference>
<dbReference type="PANTHER" id="PTHR23342">
    <property type="entry name" value="N-ACETYLGLUTAMATE SYNTHASE"/>
    <property type="match status" value="1"/>
</dbReference>
<dbReference type="PANTHER" id="PTHR23342:SF0">
    <property type="entry name" value="N-ACETYLGLUTAMATE SYNTHASE, MITOCHONDRIAL"/>
    <property type="match status" value="1"/>
</dbReference>
<dbReference type="Pfam" id="PF00696">
    <property type="entry name" value="AA_kinase"/>
    <property type="match status" value="1"/>
</dbReference>
<dbReference type="PIRSF" id="PIRSF000728">
    <property type="entry name" value="NAGK"/>
    <property type="match status" value="1"/>
</dbReference>
<dbReference type="PRINTS" id="PR00474">
    <property type="entry name" value="GLU5KINASE"/>
</dbReference>
<dbReference type="SUPFAM" id="SSF53633">
    <property type="entry name" value="Carbamate kinase-like"/>
    <property type="match status" value="1"/>
</dbReference>
<feature type="chain" id="PRO_0000264696" description="Acetylglutamate kinase">
    <location>
        <begin position="1"/>
        <end position="317"/>
    </location>
</feature>
<feature type="binding site" evidence="1">
    <location>
        <begin position="75"/>
        <end position="76"/>
    </location>
    <ligand>
        <name>substrate</name>
    </ligand>
</feature>
<feature type="binding site" evidence="1">
    <location>
        <position position="97"/>
    </location>
    <ligand>
        <name>substrate</name>
    </ligand>
</feature>
<feature type="binding site" evidence="1">
    <location>
        <position position="196"/>
    </location>
    <ligand>
        <name>substrate</name>
    </ligand>
</feature>
<feature type="site" description="Transition state stabilizer" evidence="1">
    <location>
        <position position="40"/>
    </location>
</feature>
<feature type="site" description="Transition state stabilizer" evidence="1">
    <location>
        <position position="257"/>
    </location>
</feature>
<keyword id="KW-0028">Amino-acid biosynthesis</keyword>
<keyword id="KW-0055">Arginine biosynthesis</keyword>
<keyword id="KW-0067">ATP-binding</keyword>
<keyword id="KW-0963">Cytoplasm</keyword>
<keyword id="KW-0418">Kinase</keyword>
<keyword id="KW-0547">Nucleotide-binding</keyword>
<keyword id="KW-1185">Reference proteome</keyword>
<keyword id="KW-0808">Transferase</keyword>
<proteinExistence type="inferred from homology"/>
<reference key="1">
    <citation type="journal article" date="2005" name="J. Bacteriol.">
        <title>Complete genome sequence and analysis of the multiresistant nosocomial pathogen Corynebacterium jeikeium K411, a lipid-requiring bacterium of the human skin flora.</title>
        <authorList>
            <person name="Tauch A."/>
            <person name="Kaiser O."/>
            <person name="Hain T."/>
            <person name="Goesmann A."/>
            <person name="Weisshaar B."/>
            <person name="Albersmeier A."/>
            <person name="Bekel T."/>
            <person name="Bischoff N."/>
            <person name="Brune I."/>
            <person name="Chakraborty T."/>
            <person name="Kalinowski J."/>
            <person name="Meyer F."/>
            <person name="Rupp O."/>
            <person name="Schneiker S."/>
            <person name="Viehoever P."/>
            <person name="Puehler A."/>
        </authorList>
    </citation>
    <scope>NUCLEOTIDE SEQUENCE [LARGE SCALE GENOMIC DNA]</scope>
    <source>
        <strain>K411</strain>
    </source>
</reference>
<comment type="function">
    <text evidence="1">Catalyzes the ATP-dependent phosphorylation of N-acetyl-L-glutamate.</text>
</comment>
<comment type="catalytic activity">
    <reaction evidence="1">
        <text>N-acetyl-L-glutamate + ATP = N-acetyl-L-glutamyl 5-phosphate + ADP</text>
        <dbReference type="Rhea" id="RHEA:14629"/>
        <dbReference type="ChEBI" id="CHEBI:30616"/>
        <dbReference type="ChEBI" id="CHEBI:44337"/>
        <dbReference type="ChEBI" id="CHEBI:57936"/>
        <dbReference type="ChEBI" id="CHEBI:456216"/>
        <dbReference type="EC" id="2.7.2.8"/>
    </reaction>
</comment>
<comment type="pathway">
    <text evidence="1">Amino-acid biosynthesis; L-arginine biosynthesis; N(2)-acetyl-L-ornithine from L-glutamate: step 2/4.</text>
</comment>
<comment type="subcellular location">
    <subcellularLocation>
        <location evidence="1">Cytoplasm</location>
    </subcellularLocation>
</comment>
<comment type="similarity">
    <text evidence="1">Belongs to the acetylglutamate kinase family. ArgB subfamily.</text>
</comment>
<gene>
    <name evidence="1" type="primary">argB</name>
    <name type="ordered locus">jk0843</name>
</gene>